<dbReference type="EC" id="2.4.2.7" evidence="1"/>
<dbReference type="EMBL" id="AP009552">
    <property type="protein sequence ID" value="BAG03883.1"/>
    <property type="molecule type" value="Genomic_DNA"/>
</dbReference>
<dbReference type="RefSeq" id="WP_012266767.1">
    <property type="nucleotide sequence ID" value="NC_010296.1"/>
</dbReference>
<dbReference type="SMR" id="B0JR14"/>
<dbReference type="STRING" id="449447.MAE_40610"/>
<dbReference type="PaxDb" id="449447-MAE_40610"/>
<dbReference type="EnsemblBacteria" id="BAG03883">
    <property type="protein sequence ID" value="BAG03883"/>
    <property type="gene ID" value="MAE_40610"/>
</dbReference>
<dbReference type="KEGG" id="mar:MAE_40610"/>
<dbReference type="PATRIC" id="fig|449447.4.peg.3672"/>
<dbReference type="eggNOG" id="COG0503">
    <property type="taxonomic scope" value="Bacteria"/>
</dbReference>
<dbReference type="HOGENOM" id="CLU_063339_3_0_3"/>
<dbReference type="BioCyc" id="MAER449447:MAE_RS17565-MONOMER"/>
<dbReference type="UniPathway" id="UPA00588">
    <property type="reaction ID" value="UER00646"/>
</dbReference>
<dbReference type="Proteomes" id="UP000001510">
    <property type="component" value="Chromosome"/>
</dbReference>
<dbReference type="GO" id="GO:0005737">
    <property type="term" value="C:cytoplasm"/>
    <property type="evidence" value="ECO:0007669"/>
    <property type="project" value="UniProtKB-SubCell"/>
</dbReference>
<dbReference type="GO" id="GO:0002055">
    <property type="term" value="F:adenine binding"/>
    <property type="evidence" value="ECO:0007669"/>
    <property type="project" value="TreeGrafter"/>
</dbReference>
<dbReference type="GO" id="GO:0003999">
    <property type="term" value="F:adenine phosphoribosyltransferase activity"/>
    <property type="evidence" value="ECO:0007669"/>
    <property type="project" value="UniProtKB-UniRule"/>
</dbReference>
<dbReference type="GO" id="GO:0016208">
    <property type="term" value="F:AMP binding"/>
    <property type="evidence" value="ECO:0007669"/>
    <property type="project" value="TreeGrafter"/>
</dbReference>
<dbReference type="GO" id="GO:0006168">
    <property type="term" value="P:adenine salvage"/>
    <property type="evidence" value="ECO:0007669"/>
    <property type="project" value="InterPro"/>
</dbReference>
<dbReference type="GO" id="GO:0044209">
    <property type="term" value="P:AMP salvage"/>
    <property type="evidence" value="ECO:0007669"/>
    <property type="project" value="UniProtKB-UniRule"/>
</dbReference>
<dbReference type="GO" id="GO:0006166">
    <property type="term" value="P:purine ribonucleoside salvage"/>
    <property type="evidence" value="ECO:0007669"/>
    <property type="project" value="UniProtKB-KW"/>
</dbReference>
<dbReference type="CDD" id="cd06223">
    <property type="entry name" value="PRTases_typeI"/>
    <property type="match status" value="1"/>
</dbReference>
<dbReference type="FunFam" id="3.40.50.2020:FF:000004">
    <property type="entry name" value="Adenine phosphoribosyltransferase"/>
    <property type="match status" value="1"/>
</dbReference>
<dbReference type="Gene3D" id="3.40.50.2020">
    <property type="match status" value="1"/>
</dbReference>
<dbReference type="HAMAP" id="MF_00004">
    <property type="entry name" value="Aden_phosphoribosyltr"/>
    <property type="match status" value="1"/>
</dbReference>
<dbReference type="InterPro" id="IPR005764">
    <property type="entry name" value="Ade_phspho_trans"/>
</dbReference>
<dbReference type="InterPro" id="IPR000836">
    <property type="entry name" value="PRibTrfase_dom"/>
</dbReference>
<dbReference type="InterPro" id="IPR029057">
    <property type="entry name" value="PRTase-like"/>
</dbReference>
<dbReference type="InterPro" id="IPR050054">
    <property type="entry name" value="UPRTase/APRTase"/>
</dbReference>
<dbReference type="NCBIfam" id="TIGR01090">
    <property type="entry name" value="apt"/>
    <property type="match status" value="1"/>
</dbReference>
<dbReference type="NCBIfam" id="NF002634">
    <property type="entry name" value="PRK02304.1-3"/>
    <property type="match status" value="1"/>
</dbReference>
<dbReference type="NCBIfam" id="NF002636">
    <property type="entry name" value="PRK02304.1-5"/>
    <property type="match status" value="1"/>
</dbReference>
<dbReference type="PANTHER" id="PTHR32315">
    <property type="entry name" value="ADENINE PHOSPHORIBOSYLTRANSFERASE"/>
    <property type="match status" value="1"/>
</dbReference>
<dbReference type="PANTHER" id="PTHR32315:SF3">
    <property type="entry name" value="ADENINE PHOSPHORIBOSYLTRANSFERASE"/>
    <property type="match status" value="1"/>
</dbReference>
<dbReference type="Pfam" id="PF00156">
    <property type="entry name" value="Pribosyltran"/>
    <property type="match status" value="1"/>
</dbReference>
<dbReference type="SUPFAM" id="SSF53271">
    <property type="entry name" value="PRTase-like"/>
    <property type="match status" value="1"/>
</dbReference>
<dbReference type="PROSITE" id="PS00103">
    <property type="entry name" value="PUR_PYR_PR_TRANSFER"/>
    <property type="match status" value="1"/>
</dbReference>
<comment type="function">
    <text evidence="1">Catalyzes a salvage reaction resulting in the formation of AMP, that is energically less costly than de novo synthesis.</text>
</comment>
<comment type="catalytic activity">
    <reaction evidence="1">
        <text>AMP + diphosphate = 5-phospho-alpha-D-ribose 1-diphosphate + adenine</text>
        <dbReference type="Rhea" id="RHEA:16609"/>
        <dbReference type="ChEBI" id="CHEBI:16708"/>
        <dbReference type="ChEBI" id="CHEBI:33019"/>
        <dbReference type="ChEBI" id="CHEBI:58017"/>
        <dbReference type="ChEBI" id="CHEBI:456215"/>
        <dbReference type="EC" id="2.4.2.7"/>
    </reaction>
</comment>
<comment type="pathway">
    <text evidence="1">Purine metabolism; AMP biosynthesis via salvage pathway; AMP from adenine: step 1/1.</text>
</comment>
<comment type="subunit">
    <text evidence="1">Homodimer.</text>
</comment>
<comment type="subcellular location">
    <subcellularLocation>
        <location evidence="1">Cytoplasm</location>
    </subcellularLocation>
</comment>
<comment type="similarity">
    <text evidence="1">Belongs to the purine/pyrimidine phosphoribosyltransferase family.</text>
</comment>
<reference key="1">
    <citation type="journal article" date="2007" name="DNA Res.">
        <title>Complete genomic structure of the bloom-forming toxic cyanobacterium Microcystis aeruginosa NIES-843.</title>
        <authorList>
            <person name="Kaneko T."/>
            <person name="Nakajima N."/>
            <person name="Okamoto S."/>
            <person name="Suzuki I."/>
            <person name="Tanabe Y."/>
            <person name="Tamaoki M."/>
            <person name="Nakamura Y."/>
            <person name="Kasai F."/>
            <person name="Watanabe A."/>
            <person name="Kawashima K."/>
            <person name="Kishida Y."/>
            <person name="Ono A."/>
            <person name="Shimizu Y."/>
            <person name="Takahashi C."/>
            <person name="Minami C."/>
            <person name="Fujishiro T."/>
            <person name="Kohara M."/>
            <person name="Katoh M."/>
            <person name="Nakazaki N."/>
            <person name="Nakayama S."/>
            <person name="Yamada M."/>
            <person name="Tabata S."/>
            <person name="Watanabe M.M."/>
        </authorList>
    </citation>
    <scope>NUCLEOTIDE SEQUENCE [LARGE SCALE GENOMIC DNA]</scope>
    <source>
        <strain>NIES-843 / IAM M-247</strain>
    </source>
</reference>
<proteinExistence type="inferred from homology"/>
<accession>B0JR14</accession>
<sequence>MDLKSLIRDIPDFPKPGIVFRDITTLLNHPQGLRYTIDTLTAKCRDYGLSPDYIVGMESRGFLFGVPLAYQLEAGFIPVRKPGKLPAAVHSIEYDLEYGSDSLEIHQDAVASHHKVLIVDDLIATGGTAKATAGLLEKIGCEVLGFAFIIELIDLGGREKLPDLPIITLIDY</sequence>
<organism>
    <name type="scientific">Microcystis aeruginosa (strain NIES-843 / IAM M-2473)</name>
    <dbReference type="NCBI Taxonomy" id="449447"/>
    <lineage>
        <taxon>Bacteria</taxon>
        <taxon>Bacillati</taxon>
        <taxon>Cyanobacteriota</taxon>
        <taxon>Cyanophyceae</taxon>
        <taxon>Oscillatoriophycideae</taxon>
        <taxon>Chroococcales</taxon>
        <taxon>Microcystaceae</taxon>
        <taxon>Microcystis</taxon>
    </lineage>
</organism>
<keyword id="KW-0963">Cytoplasm</keyword>
<keyword id="KW-0328">Glycosyltransferase</keyword>
<keyword id="KW-0660">Purine salvage</keyword>
<keyword id="KW-0808">Transferase</keyword>
<gene>
    <name evidence="1" type="primary">apt</name>
    <name type="ordered locus">MAE_40610</name>
</gene>
<evidence type="ECO:0000255" key="1">
    <source>
        <dbReference type="HAMAP-Rule" id="MF_00004"/>
    </source>
</evidence>
<protein>
    <recommendedName>
        <fullName evidence="1">Adenine phosphoribosyltransferase</fullName>
        <shortName evidence="1">APRT</shortName>
        <ecNumber evidence="1">2.4.2.7</ecNumber>
    </recommendedName>
</protein>
<name>APT_MICAN</name>
<feature type="chain" id="PRO_1000073797" description="Adenine phosphoribosyltransferase">
    <location>
        <begin position="1"/>
        <end position="172"/>
    </location>
</feature>